<comment type="function">
    <text evidence="1">Together with the chaperonin GroEL, plays an essential role in assisting protein folding. The GroEL-GroES system forms a nano-cage that allows encapsulation of the non-native substrate proteins and provides a physical environment optimized to promote and accelerate protein folding. GroES binds to the apical surface of the GroEL ring, thereby capping the opening of the GroEL channel.</text>
</comment>
<comment type="subunit">
    <text evidence="1">Heptamer of 7 subunits arranged in a ring. Interacts with the chaperonin GroEL.</text>
</comment>
<comment type="subcellular location">
    <subcellularLocation>
        <location evidence="1">Cytoplasm</location>
    </subcellularLocation>
</comment>
<comment type="similarity">
    <text evidence="1">Belongs to the GroES chaperonin family.</text>
</comment>
<name>CH10_CHLL3</name>
<organism>
    <name type="scientific">Chlorobium luteolum (strain DSM 273 / BCRC 81028 / 2530)</name>
    <name type="common">Pelodictyon luteolum</name>
    <dbReference type="NCBI Taxonomy" id="319225"/>
    <lineage>
        <taxon>Bacteria</taxon>
        <taxon>Pseudomonadati</taxon>
        <taxon>Chlorobiota</taxon>
        <taxon>Chlorobiia</taxon>
        <taxon>Chlorobiales</taxon>
        <taxon>Chlorobiaceae</taxon>
        <taxon>Chlorobium/Pelodictyon group</taxon>
        <taxon>Pelodictyon</taxon>
    </lineage>
</organism>
<protein>
    <recommendedName>
        <fullName evidence="1">Co-chaperonin GroES</fullName>
    </recommendedName>
    <alternativeName>
        <fullName evidence="1">10 kDa chaperonin</fullName>
    </alternativeName>
    <alternativeName>
        <fullName evidence="1">Chaperonin-10</fullName>
        <shortName evidence="1">Cpn10</shortName>
    </alternativeName>
</protein>
<evidence type="ECO:0000255" key="1">
    <source>
        <dbReference type="HAMAP-Rule" id="MF_00580"/>
    </source>
</evidence>
<accession>Q3B5F6</accession>
<keyword id="KW-0143">Chaperone</keyword>
<keyword id="KW-0963">Cytoplasm</keyword>
<keyword id="KW-1185">Reference proteome</keyword>
<reference key="1">
    <citation type="submission" date="2005-08" db="EMBL/GenBank/DDBJ databases">
        <title>Complete sequence of Pelodictyon luteolum DSM 273.</title>
        <authorList>
            <consortium name="US DOE Joint Genome Institute"/>
            <person name="Copeland A."/>
            <person name="Lucas S."/>
            <person name="Lapidus A."/>
            <person name="Barry K."/>
            <person name="Detter J.C."/>
            <person name="Glavina T."/>
            <person name="Hammon N."/>
            <person name="Israni S."/>
            <person name="Pitluck S."/>
            <person name="Bryant D."/>
            <person name="Schmutz J."/>
            <person name="Larimer F."/>
            <person name="Land M."/>
            <person name="Kyrpides N."/>
            <person name="Ivanova N."/>
            <person name="Richardson P."/>
        </authorList>
    </citation>
    <scope>NUCLEOTIDE SEQUENCE [LARGE SCALE GENOMIC DNA]</scope>
    <source>
        <strain>DSM 273 / BCRC 81028 / 2530</strain>
    </source>
</reference>
<proteinExistence type="inferred from homology"/>
<sequence>MNLKPLADRVIVKPAPAEEKTKGGLYIPDTGKEKPMYGEVVAVGAGKMSDSGQLLAMPVKAGDKVLYGKYSGTEVSVEGEDYLIMRESDIFAILA</sequence>
<gene>
    <name evidence="1" type="primary">groES</name>
    <name evidence="1" type="synonym">groS</name>
    <name type="ordered locus">Plut_0541</name>
</gene>
<dbReference type="EMBL" id="CP000096">
    <property type="protein sequence ID" value="ABB23425.1"/>
    <property type="molecule type" value="Genomic_DNA"/>
</dbReference>
<dbReference type="RefSeq" id="WP_011357300.1">
    <property type="nucleotide sequence ID" value="NC_007512.1"/>
</dbReference>
<dbReference type="SMR" id="Q3B5F6"/>
<dbReference type="STRING" id="319225.Plut_0541"/>
<dbReference type="KEGG" id="plt:Plut_0541"/>
<dbReference type="eggNOG" id="COG0234">
    <property type="taxonomic scope" value="Bacteria"/>
</dbReference>
<dbReference type="HOGENOM" id="CLU_132825_2_0_10"/>
<dbReference type="OrthoDB" id="9806791at2"/>
<dbReference type="Proteomes" id="UP000002709">
    <property type="component" value="Chromosome"/>
</dbReference>
<dbReference type="GO" id="GO:0005737">
    <property type="term" value="C:cytoplasm"/>
    <property type="evidence" value="ECO:0007669"/>
    <property type="project" value="UniProtKB-SubCell"/>
</dbReference>
<dbReference type="GO" id="GO:0005524">
    <property type="term" value="F:ATP binding"/>
    <property type="evidence" value="ECO:0007669"/>
    <property type="project" value="InterPro"/>
</dbReference>
<dbReference type="GO" id="GO:0046872">
    <property type="term" value="F:metal ion binding"/>
    <property type="evidence" value="ECO:0007669"/>
    <property type="project" value="TreeGrafter"/>
</dbReference>
<dbReference type="GO" id="GO:0044183">
    <property type="term" value="F:protein folding chaperone"/>
    <property type="evidence" value="ECO:0007669"/>
    <property type="project" value="InterPro"/>
</dbReference>
<dbReference type="GO" id="GO:0051087">
    <property type="term" value="F:protein-folding chaperone binding"/>
    <property type="evidence" value="ECO:0007669"/>
    <property type="project" value="TreeGrafter"/>
</dbReference>
<dbReference type="GO" id="GO:0051082">
    <property type="term" value="F:unfolded protein binding"/>
    <property type="evidence" value="ECO:0007669"/>
    <property type="project" value="TreeGrafter"/>
</dbReference>
<dbReference type="GO" id="GO:0051085">
    <property type="term" value="P:chaperone cofactor-dependent protein refolding"/>
    <property type="evidence" value="ECO:0007669"/>
    <property type="project" value="TreeGrafter"/>
</dbReference>
<dbReference type="CDD" id="cd00320">
    <property type="entry name" value="cpn10"/>
    <property type="match status" value="1"/>
</dbReference>
<dbReference type="FunFam" id="2.30.33.40:FF:000001">
    <property type="entry name" value="10 kDa chaperonin"/>
    <property type="match status" value="1"/>
</dbReference>
<dbReference type="Gene3D" id="2.30.33.40">
    <property type="entry name" value="GroES chaperonin"/>
    <property type="match status" value="1"/>
</dbReference>
<dbReference type="HAMAP" id="MF_00580">
    <property type="entry name" value="CH10"/>
    <property type="match status" value="1"/>
</dbReference>
<dbReference type="InterPro" id="IPR020818">
    <property type="entry name" value="Chaperonin_GroES"/>
</dbReference>
<dbReference type="InterPro" id="IPR037124">
    <property type="entry name" value="Chaperonin_GroES_sf"/>
</dbReference>
<dbReference type="InterPro" id="IPR018369">
    <property type="entry name" value="Chaprnonin_Cpn10_CS"/>
</dbReference>
<dbReference type="InterPro" id="IPR011032">
    <property type="entry name" value="GroES-like_sf"/>
</dbReference>
<dbReference type="NCBIfam" id="NF001527">
    <property type="entry name" value="PRK00364.1-2"/>
    <property type="match status" value="1"/>
</dbReference>
<dbReference type="NCBIfam" id="NF001529">
    <property type="entry name" value="PRK00364.1-5"/>
    <property type="match status" value="1"/>
</dbReference>
<dbReference type="NCBIfam" id="NF001531">
    <property type="entry name" value="PRK00364.2-2"/>
    <property type="match status" value="1"/>
</dbReference>
<dbReference type="NCBIfam" id="NF001533">
    <property type="entry name" value="PRK00364.2-4"/>
    <property type="match status" value="1"/>
</dbReference>
<dbReference type="NCBIfam" id="NF001534">
    <property type="entry name" value="PRK00364.2-5"/>
    <property type="match status" value="1"/>
</dbReference>
<dbReference type="PANTHER" id="PTHR10772">
    <property type="entry name" value="10 KDA HEAT SHOCK PROTEIN"/>
    <property type="match status" value="1"/>
</dbReference>
<dbReference type="PANTHER" id="PTHR10772:SF58">
    <property type="entry name" value="CO-CHAPERONIN GROES"/>
    <property type="match status" value="1"/>
</dbReference>
<dbReference type="Pfam" id="PF00166">
    <property type="entry name" value="Cpn10"/>
    <property type="match status" value="1"/>
</dbReference>
<dbReference type="PRINTS" id="PR00297">
    <property type="entry name" value="CHAPERONIN10"/>
</dbReference>
<dbReference type="SMART" id="SM00883">
    <property type="entry name" value="Cpn10"/>
    <property type="match status" value="1"/>
</dbReference>
<dbReference type="SUPFAM" id="SSF50129">
    <property type="entry name" value="GroES-like"/>
    <property type="match status" value="1"/>
</dbReference>
<dbReference type="PROSITE" id="PS00681">
    <property type="entry name" value="CHAPERONINS_CPN10"/>
    <property type="match status" value="1"/>
</dbReference>
<feature type="chain" id="PRO_1000025319" description="Co-chaperonin GroES">
    <location>
        <begin position="1"/>
        <end position="95"/>
    </location>
</feature>